<sequence length="312" mass="34305">MSLNCKDLLGLEHLGKKDLQTILDSVGPFKSLFTRSVKKVPTLVGKTVVTLFYEPSTRTRNSFEIAAKRLSADVVNVTVNTSSIVKGESLIDTGKTLEAMKADYLIIRHSLAGAPDILARNLNASIINAGDGFHEHPTQGLLDLYTMYEKKKKIEGLKVLLVGDILHSRVAKSNIWALIKMGAEIAVVGPPTLIPSNIEDLGVKVYYDLNEAIKKVDVVNILRIQLERQQENLFPSVHEYVELYQVTEERLAMAKPGVLIMHPGPMNRGIEISSDVADSPNAVINEQVTNGIAVRMAVLCLLKPKRKNASSD</sequence>
<dbReference type="EC" id="2.1.3.2" evidence="1"/>
<dbReference type="EMBL" id="AP009510">
    <property type="protein sequence ID" value="BAG14231.1"/>
    <property type="molecule type" value="Genomic_DNA"/>
</dbReference>
<dbReference type="RefSeq" id="WP_015423752.1">
    <property type="nucleotide sequence ID" value="NC_020419.1"/>
</dbReference>
<dbReference type="SMR" id="B1GYY8"/>
<dbReference type="STRING" id="471821.TGRD_748"/>
<dbReference type="KEGG" id="eti:RSTT_706"/>
<dbReference type="KEGG" id="rsd:TGRD_748"/>
<dbReference type="PATRIC" id="fig|471821.5.peg.1286"/>
<dbReference type="HOGENOM" id="CLU_043846_2_0_0"/>
<dbReference type="OrthoDB" id="9774690at2"/>
<dbReference type="UniPathway" id="UPA00070">
    <property type="reaction ID" value="UER00116"/>
</dbReference>
<dbReference type="Proteomes" id="UP000001691">
    <property type="component" value="Chromosome"/>
</dbReference>
<dbReference type="GO" id="GO:0005829">
    <property type="term" value="C:cytosol"/>
    <property type="evidence" value="ECO:0007669"/>
    <property type="project" value="TreeGrafter"/>
</dbReference>
<dbReference type="GO" id="GO:0016597">
    <property type="term" value="F:amino acid binding"/>
    <property type="evidence" value="ECO:0007669"/>
    <property type="project" value="InterPro"/>
</dbReference>
<dbReference type="GO" id="GO:0004070">
    <property type="term" value="F:aspartate carbamoyltransferase activity"/>
    <property type="evidence" value="ECO:0007669"/>
    <property type="project" value="UniProtKB-UniRule"/>
</dbReference>
<dbReference type="GO" id="GO:0006207">
    <property type="term" value="P:'de novo' pyrimidine nucleobase biosynthetic process"/>
    <property type="evidence" value="ECO:0007669"/>
    <property type="project" value="InterPro"/>
</dbReference>
<dbReference type="GO" id="GO:0044205">
    <property type="term" value="P:'de novo' UMP biosynthetic process"/>
    <property type="evidence" value="ECO:0007669"/>
    <property type="project" value="UniProtKB-UniRule"/>
</dbReference>
<dbReference type="GO" id="GO:0006520">
    <property type="term" value="P:amino acid metabolic process"/>
    <property type="evidence" value="ECO:0007669"/>
    <property type="project" value="InterPro"/>
</dbReference>
<dbReference type="FunFam" id="3.40.50.1370:FF:000007">
    <property type="entry name" value="Aspartate carbamoyltransferase"/>
    <property type="match status" value="1"/>
</dbReference>
<dbReference type="Gene3D" id="3.40.50.1370">
    <property type="entry name" value="Aspartate/ornithine carbamoyltransferase"/>
    <property type="match status" value="2"/>
</dbReference>
<dbReference type="HAMAP" id="MF_00001">
    <property type="entry name" value="Asp_carb_tr"/>
    <property type="match status" value="1"/>
</dbReference>
<dbReference type="InterPro" id="IPR006132">
    <property type="entry name" value="Asp/Orn_carbamoyltranf_P-bd"/>
</dbReference>
<dbReference type="InterPro" id="IPR006130">
    <property type="entry name" value="Asp/Orn_carbamoylTrfase"/>
</dbReference>
<dbReference type="InterPro" id="IPR036901">
    <property type="entry name" value="Asp/Orn_carbamoylTrfase_sf"/>
</dbReference>
<dbReference type="InterPro" id="IPR002082">
    <property type="entry name" value="Asp_carbamoyltransf"/>
</dbReference>
<dbReference type="InterPro" id="IPR006131">
    <property type="entry name" value="Asp_carbamoyltransf_Asp/Orn-bd"/>
</dbReference>
<dbReference type="NCBIfam" id="TIGR00670">
    <property type="entry name" value="asp_carb_tr"/>
    <property type="match status" value="1"/>
</dbReference>
<dbReference type="NCBIfam" id="NF002032">
    <property type="entry name" value="PRK00856.1"/>
    <property type="match status" value="1"/>
</dbReference>
<dbReference type="PANTHER" id="PTHR45753:SF6">
    <property type="entry name" value="ASPARTATE CARBAMOYLTRANSFERASE"/>
    <property type="match status" value="1"/>
</dbReference>
<dbReference type="PANTHER" id="PTHR45753">
    <property type="entry name" value="ORNITHINE CARBAMOYLTRANSFERASE, MITOCHONDRIAL"/>
    <property type="match status" value="1"/>
</dbReference>
<dbReference type="Pfam" id="PF00185">
    <property type="entry name" value="OTCace"/>
    <property type="match status" value="1"/>
</dbReference>
<dbReference type="Pfam" id="PF02729">
    <property type="entry name" value="OTCace_N"/>
    <property type="match status" value="1"/>
</dbReference>
<dbReference type="PRINTS" id="PR00100">
    <property type="entry name" value="AOTCASE"/>
</dbReference>
<dbReference type="PRINTS" id="PR00101">
    <property type="entry name" value="ATCASE"/>
</dbReference>
<dbReference type="SUPFAM" id="SSF53671">
    <property type="entry name" value="Aspartate/ornithine carbamoyltransferase"/>
    <property type="match status" value="1"/>
</dbReference>
<dbReference type="PROSITE" id="PS00097">
    <property type="entry name" value="CARBAMOYLTRANSFERASE"/>
    <property type="match status" value="1"/>
</dbReference>
<protein>
    <recommendedName>
        <fullName evidence="1">Aspartate carbamoyltransferase catalytic subunit</fullName>
        <ecNumber evidence="1">2.1.3.2</ecNumber>
    </recommendedName>
    <alternativeName>
        <fullName evidence="1">Aspartate transcarbamylase</fullName>
        <shortName evidence="1">ATCase</shortName>
    </alternativeName>
</protein>
<accession>B1GYY8</accession>
<feature type="chain" id="PRO_1000088813" description="Aspartate carbamoyltransferase catalytic subunit">
    <location>
        <begin position="1"/>
        <end position="312"/>
    </location>
</feature>
<feature type="binding site" evidence="1">
    <location>
        <position position="58"/>
    </location>
    <ligand>
        <name>carbamoyl phosphate</name>
        <dbReference type="ChEBI" id="CHEBI:58228"/>
    </ligand>
</feature>
<feature type="binding site" evidence="1">
    <location>
        <position position="59"/>
    </location>
    <ligand>
        <name>carbamoyl phosphate</name>
        <dbReference type="ChEBI" id="CHEBI:58228"/>
    </ligand>
</feature>
<feature type="binding site" evidence="1">
    <location>
        <position position="86"/>
    </location>
    <ligand>
        <name>L-aspartate</name>
        <dbReference type="ChEBI" id="CHEBI:29991"/>
    </ligand>
</feature>
<feature type="binding site" evidence="1">
    <location>
        <position position="108"/>
    </location>
    <ligand>
        <name>carbamoyl phosphate</name>
        <dbReference type="ChEBI" id="CHEBI:58228"/>
    </ligand>
</feature>
<feature type="binding site" evidence="1">
    <location>
        <position position="136"/>
    </location>
    <ligand>
        <name>carbamoyl phosphate</name>
        <dbReference type="ChEBI" id="CHEBI:58228"/>
    </ligand>
</feature>
<feature type="binding site" evidence="1">
    <location>
        <position position="139"/>
    </location>
    <ligand>
        <name>carbamoyl phosphate</name>
        <dbReference type="ChEBI" id="CHEBI:58228"/>
    </ligand>
</feature>
<feature type="binding site" evidence="1">
    <location>
        <position position="169"/>
    </location>
    <ligand>
        <name>L-aspartate</name>
        <dbReference type="ChEBI" id="CHEBI:29991"/>
    </ligand>
</feature>
<feature type="binding site" evidence="1">
    <location>
        <position position="223"/>
    </location>
    <ligand>
        <name>L-aspartate</name>
        <dbReference type="ChEBI" id="CHEBI:29991"/>
    </ligand>
</feature>
<feature type="binding site" evidence="1">
    <location>
        <position position="264"/>
    </location>
    <ligand>
        <name>carbamoyl phosphate</name>
        <dbReference type="ChEBI" id="CHEBI:58228"/>
    </ligand>
</feature>
<feature type="binding site" evidence="1">
    <location>
        <position position="265"/>
    </location>
    <ligand>
        <name>carbamoyl phosphate</name>
        <dbReference type="ChEBI" id="CHEBI:58228"/>
    </ligand>
</feature>
<gene>
    <name evidence="1" type="primary">pyrB</name>
    <name type="ordered locus">TGRD_748</name>
</gene>
<name>PYRB_ENDTX</name>
<reference key="1">
    <citation type="journal article" date="2008" name="Proc. Natl. Acad. Sci. U.S.A.">
        <title>Complete genome of the uncultured termite group 1 bacteria in a single host protist cell.</title>
        <authorList>
            <person name="Hongoh Y."/>
            <person name="Sharma V.K."/>
            <person name="Prakash T."/>
            <person name="Noda S."/>
            <person name="Taylor T.D."/>
            <person name="Kudo T."/>
            <person name="Sakaki Y."/>
            <person name="Toyoda A."/>
            <person name="Hattori M."/>
            <person name="Ohkuma M."/>
        </authorList>
    </citation>
    <scope>NUCLEOTIDE SEQUENCE [LARGE SCALE GENOMIC DNA]</scope>
</reference>
<keyword id="KW-0665">Pyrimidine biosynthesis</keyword>
<keyword id="KW-0808">Transferase</keyword>
<proteinExistence type="inferred from homology"/>
<comment type="function">
    <text evidence="1">Catalyzes the condensation of carbamoyl phosphate and aspartate to form carbamoyl aspartate and inorganic phosphate, the committed step in the de novo pyrimidine nucleotide biosynthesis pathway.</text>
</comment>
<comment type="catalytic activity">
    <reaction evidence="1">
        <text>carbamoyl phosphate + L-aspartate = N-carbamoyl-L-aspartate + phosphate + H(+)</text>
        <dbReference type="Rhea" id="RHEA:20013"/>
        <dbReference type="ChEBI" id="CHEBI:15378"/>
        <dbReference type="ChEBI" id="CHEBI:29991"/>
        <dbReference type="ChEBI" id="CHEBI:32814"/>
        <dbReference type="ChEBI" id="CHEBI:43474"/>
        <dbReference type="ChEBI" id="CHEBI:58228"/>
        <dbReference type="EC" id="2.1.3.2"/>
    </reaction>
</comment>
<comment type="pathway">
    <text evidence="1">Pyrimidine metabolism; UMP biosynthesis via de novo pathway; (S)-dihydroorotate from bicarbonate: step 2/3.</text>
</comment>
<comment type="subunit">
    <text evidence="1">Heterododecamer (2C3:3R2) of six catalytic PyrB chains organized as two trimers (C3), and six regulatory PyrI chains organized as three dimers (R2).</text>
</comment>
<comment type="similarity">
    <text evidence="1">Belongs to the aspartate/ornithine carbamoyltransferase superfamily. ATCase family.</text>
</comment>
<evidence type="ECO:0000255" key="1">
    <source>
        <dbReference type="HAMAP-Rule" id="MF_00001"/>
    </source>
</evidence>
<organism>
    <name type="scientific">Endomicrobium trichonymphae</name>
    <dbReference type="NCBI Taxonomy" id="1408204"/>
    <lineage>
        <taxon>Bacteria</taxon>
        <taxon>Pseudomonadati</taxon>
        <taxon>Elusimicrobiota</taxon>
        <taxon>Endomicrobiia</taxon>
        <taxon>Endomicrobiales</taxon>
        <taxon>Endomicrobiaceae</taxon>
        <taxon>Candidatus Endomicrobiellum</taxon>
    </lineage>
</organism>